<organism>
    <name type="scientific">Staphylococcus aureus (strain MRSA252)</name>
    <dbReference type="NCBI Taxonomy" id="282458"/>
    <lineage>
        <taxon>Bacteria</taxon>
        <taxon>Bacillati</taxon>
        <taxon>Bacillota</taxon>
        <taxon>Bacilli</taxon>
        <taxon>Bacillales</taxon>
        <taxon>Staphylococcaceae</taxon>
        <taxon>Staphylococcus</taxon>
    </lineage>
</organism>
<reference key="1">
    <citation type="journal article" date="2004" name="Proc. Natl. Acad. Sci. U.S.A.">
        <title>Complete genomes of two clinical Staphylococcus aureus strains: evidence for the rapid evolution of virulence and drug resistance.</title>
        <authorList>
            <person name="Holden M.T.G."/>
            <person name="Feil E.J."/>
            <person name="Lindsay J.A."/>
            <person name="Peacock S.J."/>
            <person name="Day N.P.J."/>
            <person name="Enright M.C."/>
            <person name="Foster T.J."/>
            <person name="Moore C.E."/>
            <person name="Hurst L."/>
            <person name="Atkin R."/>
            <person name="Barron A."/>
            <person name="Bason N."/>
            <person name="Bentley S.D."/>
            <person name="Chillingworth C."/>
            <person name="Chillingworth T."/>
            <person name="Churcher C."/>
            <person name="Clark L."/>
            <person name="Corton C."/>
            <person name="Cronin A."/>
            <person name="Doggett J."/>
            <person name="Dowd L."/>
            <person name="Feltwell T."/>
            <person name="Hance Z."/>
            <person name="Harris B."/>
            <person name="Hauser H."/>
            <person name="Holroyd S."/>
            <person name="Jagels K."/>
            <person name="James K.D."/>
            <person name="Lennard N."/>
            <person name="Line A."/>
            <person name="Mayes R."/>
            <person name="Moule S."/>
            <person name="Mungall K."/>
            <person name="Ormond D."/>
            <person name="Quail M.A."/>
            <person name="Rabbinowitsch E."/>
            <person name="Rutherford K.M."/>
            <person name="Sanders M."/>
            <person name="Sharp S."/>
            <person name="Simmonds M."/>
            <person name="Stevens K."/>
            <person name="Whitehead S."/>
            <person name="Barrell B.G."/>
            <person name="Spratt B.G."/>
            <person name="Parkhill J."/>
        </authorList>
    </citation>
    <scope>NUCLEOTIDE SEQUENCE [LARGE SCALE GENOMIC DNA]</scope>
    <source>
        <strain>MRSA252</strain>
    </source>
</reference>
<sequence>MSKQRIYEYAKELNLKSKEIIDELKSMNIEVSNHMQALEDDQIKALDKKFKKEQKNDNKQSTQNNHQKSNNQNQNKGQQKDNKKNQQQNNKGNKGNKKNNRNNKKNNKNNKPQSQPAAPKEIPSKVTYQEGITVGEFADKLNVESSEIIKKLFLLGIVANINQSLNQETIELIADDYGVEVEEEVVINEEDLSIYFEDEKDDPEAIERPAVVTIMGHVDHGKTTLLDSIRHTKVTAGEAGGITQHIGAYQIENDGKKITFLDTPGHAAFTTMRARGAQVTDITILVVAADDGVMPQTIEAINHAKEAEVPIIVAVNKIDKPTSNPDRVMQELTEYGLIPEDWGGETIFVPLSALSGDGIDDLLEMIGLVAEVQELKANPKNRAVGTVIEAELDKSRGPSASLLVQNGTLNVGDAIVVGNTYGRIRAMVNDLGQRIKTAGPSTPVEITGINDVPQAGDRFVVFSDEKQARRIGESRHEASIVQQRQESKNVSLDNLFEQMKQGEMKDLNVIIKGDVQGSVEALAASLMKIDVEGVNVRIIHTAVGAINESDVTLANASNGIIIGFNVRPDSGAKRAAEAENVDMRLHRVIYNVIEEIESAMKGLLDPEFEEQVIGQAEVRQTFKVSKVGTIAGCYVTEGKITRNAGVRIIRDGIVQYEGELDTLKRFKDDAKEVAKGYECGITIENYNDLKEGDVIEAFEMVEIKR</sequence>
<feature type="chain" id="PRO_0000137251" description="Translation initiation factor IF-2">
    <location>
        <begin position="1"/>
        <end position="705"/>
    </location>
</feature>
<feature type="domain" description="tr-type G">
    <location>
        <begin position="207"/>
        <end position="376"/>
    </location>
</feature>
<feature type="region of interest" description="Disordered" evidence="3">
    <location>
        <begin position="40"/>
        <end position="124"/>
    </location>
</feature>
<feature type="region of interest" description="G1" evidence="1">
    <location>
        <begin position="216"/>
        <end position="223"/>
    </location>
</feature>
<feature type="region of interest" description="G2" evidence="1">
    <location>
        <begin position="241"/>
        <end position="245"/>
    </location>
</feature>
<feature type="region of interest" description="G3" evidence="1">
    <location>
        <begin position="262"/>
        <end position="265"/>
    </location>
</feature>
<feature type="region of interest" description="G4" evidence="1">
    <location>
        <begin position="316"/>
        <end position="319"/>
    </location>
</feature>
<feature type="region of interest" description="G5" evidence="1">
    <location>
        <begin position="352"/>
        <end position="354"/>
    </location>
</feature>
<feature type="compositionally biased region" description="Basic and acidic residues" evidence="3">
    <location>
        <begin position="41"/>
        <end position="58"/>
    </location>
</feature>
<feature type="compositionally biased region" description="Low complexity" evidence="3">
    <location>
        <begin position="59"/>
        <end position="77"/>
    </location>
</feature>
<feature type="compositionally biased region" description="Basic residues" evidence="3">
    <location>
        <begin position="94"/>
        <end position="108"/>
    </location>
</feature>
<feature type="binding site" evidence="2">
    <location>
        <begin position="216"/>
        <end position="223"/>
    </location>
    <ligand>
        <name>GTP</name>
        <dbReference type="ChEBI" id="CHEBI:37565"/>
    </ligand>
</feature>
<feature type="binding site" evidence="2">
    <location>
        <begin position="262"/>
        <end position="266"/>
    </location>
    <ligand>
        <name>GTP</name>
        <dbReference type="ChEBI" id="CHEBI:37565"/>
    </ligand>
</feature>
<feature type="binding site" evidence="2">
    <location>
        <begin position="316"/>
        <end position="319"/>
    </location>
    <ligand>
        <name>GTP</name>
        <dbReference type="ChEBI" id="CHEBI:37565"/>
    </ligand>
</feature>
<comment type="function">
    <text evidence="2">One of the essential components for the initiation of protein synthesis. Protects formylmethionyl-tRNA from spontaneous hydrolysis and promotes its binding to the 30S ribosomal subunits. Also involved in the hydrolysis of GTP during the formation of the 70S ribosomal complex.</text>
</comment>
<comment type="subcellular location">
    <subcellularLocation>
        <location evidence="2">Cytoplasm</location>
    </subcellularLocation>
</comment>
<comment type="similarity">
    <text evidence="2">Belongs to the TRAFAC class translation factor GTPase superfamily. Classic translation factor GTPase family. IF-2 subfamily.</text>
</comment>
<keyword id="KW-0963">Cytoplasm</keyword>
<keyword id="KW-0342">GTP-binding</keyword>
<keyword id="KW-0396">Initiation factor</keyword>
<keyword id="KW-0547">Nucleotide-binding</keyword>
<keyword id="KW-0648">Protein biosynthesis</keyword>
<evidence type="ECO:0000250" key="1"/>
<evidence type="ECO:0000255" key="2">
    <source>
        <dbReference type="HAMAP-Rule" id="MF_00100"/>
    </source>
</evidence>
<evidence type="ECO:0000256" key="3">
    <source>
        <dbReference type="SAM" id="MobiDB-lite"/>
    </source>
</evidence>
<protein>
    <recommendedName>
        <fullName evidence="2">Translation initiation factor IF-2</fullName>
    </recommendedName>
</protein>
<proteinExistence type="inferred from homology"/>
<name>IF2_STAAR</name>
<dbReference type="EMBL" id="BX571856">
    <property type="protein sequence ID" value="CAG40247.1"/>
    <property type="molecule type" value="Genomic_DNA"/>
</dbReference>
<dbReference type="RefSeq" id="WP_000043642.1">
    <property type="nucleotide sequence ID" value="NC_002952.2"/>
</dbReference>
<dbReference type="SMR" id="Q6GHG6"/>
<dbReference type="KEGG" id="sar:SAR1245"/>
<dbReference type="HOGENOM" id="CLU_006301_5_1_9"/>
<dbReference type="Proteomes" id="UP000000596">
    <property type="component" value="Chromosome"/>
</dbReference>
<dbReference type="GO" id="GO:0005829">
    <property type="term" value="C:cytosol"/>
    <property type="evidence" value="ECO:0007669"/>
    <property type="project" value="TreeGrafter"/>
</dbReference>
<dbReference type="GO" id="GO:0005525">
    <property type="term" value="F:GTP binding"/>
    <property type="evidence" value="ECO:0007669"/>
    <property type="project" value="UniProtKB-KW"/>
</dbReference>
<dbReference type="GO" id="GO:0003924">
    <property type="term" value="F:GTPase activity"/>
    <property type="evidence" value="ECO:0007669"/>
    <property type="project" value="UniProtKB-UniRule"/>
</dbReference>
<dbReference type="GO" id="GO:0003743">
    <property type="term" value="F:translation initiation factor activity"/>
    <property type="evidence" value="ECO:0007669"/>
    <property type="project" value="UniProtKB-UniRule"/>
</dbReference>
<dbReference type="CDD" id="cd01887">
    <property type="entry name" value="IF2_eIF5B"/>
    <property type="match status" value="1"/>
</dbReference>
<dbReference type="CDD" id="cd03702">
    <property type="entry name" value="IF2_mtIF2_II"/>
    <property type="match status" value="1"/>
</dbReference>
<dbReference type="CDD" id="cd03692">
    <property type="entry name" value="mtIF2_IVc"/>
    <property type="match status" value="1"/>
</dbReference>
<dbReference type="FunFam" id="1.10.10.2480:FF:000002">
    <property type="entry name" value="Translation initiation factor IF-2"/>
    <property type="match status" value="1"/>
</dbReference>
<dbReference type="FunFam" id="2.40.30.10:FF:000007">
    <property type="entry name" value="Translation initiation factor IF-2"/>
    <property type="match status" value="1"/>
</dbReference>
<dbReference type="FunFam" id="2.40.30.10:FF:000008">
    <property type="entry name" value="Translation initiation factor IF-2"/>
    <property type="match status" value="1"/>
</dbReference>
<dbReference type="FunFam" id="3.40.50.10050:FF:000001">
    <property type="entry name" value="Translation initiation factor IF-2"/>
    <property type="match status" value="1"/>
</dbReference>
<dbReference type="FunFam" id="3.40.50.300:FF:000019">
    <property type="entry name" value="Translation initiation factor IF-2"/>
    <property type="match status" value="1"/>
</dbReference>
<dbReference type="Gene3D" id="1.10.10.2480">
    <property type="match status" value="1"/>
</dbReference>
<dbReference type="Gene3D" id="3.40.50.300">
    <property type="entry name" value="P-loop containing nucleotide triphosphate hydrolases"/>
    <property type="match status" value="1"/>
</dbReference>
<dbReference type="Gene3D" id="2.40.30.10">
    <property type="entry name" value="Translation factors"/>
    <property type="match status" value="2"/>
</dbReference>
<dbReference type="Gene3D" id="3.40.50.10050">
    <property type="entry name" value="Translation initiation factor IF- 2, domain 3"/>
    <property type="match status" value="1"/>
</dbReference>
<dbReference type="HAMAP" id="MF_00100_B">
    <property type="entry name" value="IF_2_B"/>
    <property type="match status" value="1"/>
</dbReference>
<dbReference type="InterPro" id="IPR053905">
    <property type="entry name" value="EF-G-like_DII"/>
</dbReference>
<dbReference type="InterPro" id="IPR044145">
    <property type="entry name" value="IF2_II"/>
</dbReference>
<dbReference type="InterPro" id="IPR006847">
    <property type="entry name" value="IF2_N"/>
</dbReference>
<dbReference type="InterPro" id="IPR027417">
    <property type="entry name" value="P-loop_NTPase"/>
</dbReference>
<dbReference type="InterPro" id="IPR005225">
    <property type="entry name" value="Small_GTP-bd"/>
</dbReference>
<dbReference type="InterPro" id="IPR000795">
    <property type="entry name" value="T_Tr_GTP-bd_dom"/>
</dbReference>
<dbReference type="InterPro" id="IPR000178">
    <property type="entry name" value="TF_IF2_bacterial-like"/>
</dbReference>
<dbReference type="InterPro" id="IPR015760">
    <property type="entry name" value="TIF_IF2"/>
</dbReference>
<dbReference type="InterPro" id="IPR023115">
    <property type="entry name" value="TIF_IF2_dom3"/>
</dbReference>
<dbReference type="InterPro" id="IPR036925">
    <property type="entry name" value="TIF_IF2_dom3_sf"/>
</dbReference>
<dbReference type="InterPro" id="IPR009000">
    <property type="entry name" value="Transl_B-barrel_sf"/>
</dbReference>
<dbReference type="NCBIfam" id="TIGR00487">
    <property type="entry name" value="IF-2"/>
    <property type="match status" value="1"/>
</dbReference>
<dbReference type="NCBIfam" id="TIGR00231">
    <property type="entry name" value="small_GTP"/>
    <property type="match status" value="1"/>
</dbReference>
<dbReference type="PANTHER" id="PTHR43381:SF5">
    <property type="entry name" value="TR-TYPE G DOMAIN-CONTAINING PROTEIN"/>
    <property type="match status" value="1"/>
</dbReference>
<dbReference type="PANTHER" id="PTHR43381">
    <property type="entry name" value="TRANSLATION INITIATION FACTOR IF-2-RELATED"/>
    <property type="match status" value="1"/>
</dbReference>
<dbReference type="Pfam" id="PF22042">
    <property type="entry name" value="EF-G_D2"/>
    <property type="match status" value="1"/>
</dbReference>
<dbReference type="Pfam" id="PF00009">
    <property type="entry name" value="GTP_EFTU"/>
    <property type="match status" value="1"/>
</dbReference>
<dbReference type="Pfam" id="PF11987">
    <property type="entry name" value="IF-2"/>
    <property type="match status" value="1"/>
</dbReference>
<dbReference type="Pfam" id="PF04760">
    <property type="entry name" value="IF2_N"/>
    <property type="match status" value="2"/>
</dbReference>
<dbReference type="SUPFAM" id="SSF52156">
    <property type="entry name" value="Initiation factor IF2/eIF5b, domain 3"/>
    <property type="match status" value="1"/>
</dbReference>
<dbReference type="SUPFAM" id="SSF52540">
    <property type="entry name" value="P-loop containing nucleoside triphosphate hydrolases"/>
    <property type="match status" value="1"/>
</dbReference>
<dbReference type="SUPFAM" id="SSF50447">
    <property type="entry name" value="Translation proteins"/>
    <property type="match status" value="2"/>
</dbReference>
<dbReference type="PROSITE" id="PS51722">
    <property type="entry name" value="G_TR_2"/>
    <property type="match status" value="1"/>
</dbReference>
<dbReference type="PROSITE" id="PS01176">
    <property type="entry name" value="IF2"/>
    <property type="match status" value="1"/>
</dbReference>
<gene>
    <name evidence="2" type="primary">infB</name>
    <name type="ordered locus">SAR1245</name>
</gene>
<accession>Q6GHG6</accession>